<sequence>MRERLLAAEKVKSIEWHGDRLSLLDQRKLPTEEVWHSCDSAAAVADAIRDMVVRGAPAIGISAAYALVLAARTRMAAGGDWRQALEEDVALLAASRPTAVNLFWALNQMRERLERLKPGEDPCAALEAQAISIHESDREANLAMAQFGVDLIRRHQGNPQNLLTHCNTGALATGGFGTALGVIRAAHLDGLVERVYVDETRPWLQGSRLTAWELLGDGVPATLNVDSAAAHLMKSRGISWVIVGADRITANGDVANKIGTYQLAVLAMHHGVRFMVVAPSSTIDMALESGDEILLEERAGSELLEVNGQRFAAEIEVFNPVFDVTPADLIDAIVTEKGVVERPNAAKMTELMNRKRLH</sequence>
<feature type="chain" id="PRO_0000357229" description="Methylthioribose-1-phosphate isomerase">
    <location>
        <begin position="1"/>
        <end position="358"/>
    </location>
</feature>
<feature type="active site" description="Proton donor" evidence="1">
    <location>
        <position position="246"/>
    </location>
</feature>
<feature type="binding site" evidence="1">
    <location>
        <begin position="54"/>
        <end position="56"/>
    </location>
    <ligand>
        <name>substrate</name>
    </ligand>
</feature>
<feature type="binding site" evidence="1">
    <location>
        <position position="96"/>
    </location>
    <ligand>
        <name>substrate</name>
    </ligand>
</feature>
<feature type="binding site" evidence="1">
    <location>
        <position position="205"/>
    </location>
    <ligand>
        <name>substrate</name>
    </ligand>
</feature>
<feature type="binding site" evidence="1">
    <location>
        <begin position="256"/>
        <end position="257"/>
    </location>
    <ligand>
        <name>substrate</name>
    </ligand>
</feature>
<feature type="site" description="Transition state stabilizer" evidence="1">
    <location>
        <position position="166"/>
    </location>
</feature>
<name>MTNA_STUS1</name>
<dbReference type="EC" id="5.3.1.23" evidence="1"/>
<dbReference type="EMBL" id="CP000304">
    <property type="protein sequence ID" value="ABP79999.1"/>
    <property type="status" value="ALT_INIT"/>
    <property type="molecule type" value="Genomic_DNA"/>
</dbReference>
<dbReference type="RefSeq" id="WP_041755524.1">
    <property type="nucleotide sequence ID" value="NC_009434.1"/>
</dbReference>
<dbReference type="SMR" id="A4VLZ8"/>
<dbReference type="GeneID" id="66821179"/>
<dbReference type="KEGG" id="psa:PST_2345"/>
<dbReference type="eggNOG" id="COG0182">
    <property type="taxonomic scope" value="Bacteria"/>
</dbReference>
<dbReference type="HOGENOM" id="CLU_016218_1_2_6"/>
<dbReference type="UniPathway" id="UPA00904">
    <property type="reaction ID" value="UER00874"/>
</dbReference>
<dbReference type="Proteomes" id="UP000000233">
    <property type="component" value="Chromosome"/>
</dbReference>
<dbReference type="GO" id="GO:0046523">
    <property type="term" value="F:S-methyl-5-thioribose-1-phosphate isomerase activity"/>
    <property type="evidence" value="ECO:0007669"/>
    <property type="project" value="UniProtKB-UniRule"/>
</dbReference>
<dbReference type="GO" id="GO:0019509">
    <property type="term" value="P:L-methionine salvage from methylthioadenosine"/>
    <property type="evidence" value="ECO:0007669"/>
    <property type="project" value="UniProtKB-UniRule"/>
</dbReference>
<dbReference type="FunFam" id="1.20.120.420:FF:000008">
    <property type="entry name" value="Methylthioribose-1-phosphate isomerase"/>
    <property type="match status" value="1"/>
</dbReference>
<dbReference type="FunFam" id="3.40.50.10470:FF:000006">
    <property type="entry name" value="Methylthioribose-1-phosphate isomerase"/>
    <property type="match status" value="1"/>
</dbReference>
<dbReference type="Gene3D" id="1.20.120.420">
    <property type="entry name" value="translation initiation factor eif-2b, domain 1"/>
    <property type="match status" value="1"/>
</dbReference>
<dbReference type="Gene3D" id="3.40.50.10470">
    <property type="entry name" value="Translation initiation factor eif-2b, domain 2"/>
    <property type="match status" value="1"/>
</dbReference>
<dbReference type="HAMAP" id="MF_01678">
    <property type="entry name" value="Salvage_MtnA"/>
    <property type="match status" value="1"/>
</dbReference>
<dbReference type="InterPro" id="IPR000649">
    <property type="entry name" value="IF-2B-related"/>
</dbReference>
<dbReference type="InterPro" id="IPR005251">
    <property type="entry name" value="IF-M1Pi"/>
</dbReference>
<dbReference type="InterPro" id="IPR042529">
    <property type="entry name" value="IF_2B-like_C"/>
</dbReference>
<dbReference type="InterPro" id="IPR011559">
    <property type="entry name" value="Initiation_fac_2B_a/b/d"/>
</dbReference>
<dbReference type="InterPro" id="IPR027363">
    <property type="entry name" value="M1Pi_N"/>
</dbReference>
<dbReference type="InterPro" id="IPR037171">
    <property type="entry name" value="NagB/RpiA_transferase-like"/>
</dbReference>
<dbReference type="NCBIfam" id="TIGR00524">
    <property type="entry name" value="eIF-2B_rel"/>
    <property type="match status" value="1"/>
</dbReference>
<dbReference type="NCBIfam" id="NF004326">
    <property type="entry name" value="PRK05720.1"/>
    <property type="match status" value="1"/>
</dbReference>
<dbReference type="NCBIfam" id="TIGR00512">
    <property type="entry name" value="salvage_mtnA"/>
    <property type="match status" value="1"/>
</dbReference>
<dbReference type="PANTHER" id="PTHR43475">
    <property type="entry name" value="METHYLTHIORIBOSE-1-PHOSPHATE ISOMERASE"/>
    <property type="match status" value="1"/>
</dbReference>
<dbReference type="PANTHER" id="PTHR43475:SF1">
    <property type="entry name" value="METHYLTHIORIBOSE-1-PHOSPHATE ISOMERASE"/>
    <property type="match status" value="1"/>
</dbReference>
<dbReference type="Pfam" id="PF01008">
    <property type="entry name" value="IF-2B"/>
    <property type="match status" value="1"/>
</dbReference>
<dbReference type="SUPFAM" id="SSF100950">
    <property type="entry name" value="NagB/RpiA/CoA transferase-like"/>
    <property type="match status" value="1"/>
</dbReference>
<proteinExistence type="inferred from homology"/>
<keyword id="KW-0028">Amino-acid biosynthesis</keyword>
<keyword id="KW-0413">Isomerase</keyword>
<keyword id="KW-0486">Methionine biosynthesis</keyword>
<keyword id="KW-1185">Reference proteome</keyword>
<evidence type="ECO:0000255" key="1">
    <source>
        <dbReference type="HAMAP-Rule" id="MF_01678"/>
    </source>
</evidence>
<evidence type="ECO:0000305" key="2"/>
<gene>
    <name evidence="1" type="primary">mtnA</name>
    <name type="ordered locus">PST_2345</name>
</gene>
<organism>
    <name type="scientific">Stutzerimonas stutzeri (strain A1501)</name>
    <name type="common">Pseudomonas stutzeri</name>
    <dbReference type="NCBI Taxonomy" id="379731"/>
    <lineage>
        <taxon>Bacteria</taxon>
        <taxon>Pseudomonadati</taxon>
        <taxon>Pseudomonadota</taxon>
        <taxon>Gammaproteobacteria</taxon>
        <taxon>Pseudomonadales</taxon>
        <taxon>Pseudomonadaceae</taxon>
        <taxon>Stutzerimonas</taxon>
    </lineage>
</organism>
<accession>A4VLZ8</accession>
<reference key="1">
    <citation type="journal article" date="2008" name="Proc. Natl. Acad. Sci. U.S.A.">
        <title>Nitrogen fixation island and rhizosphere competence traits in the genome of root-associated Pseudomonas stutzeri A1501.</title>
        <authorList>
            <person name="Yan Y."/>
            <person name="Yang J."/>
            <person name="Dou Y."/>
            <person name="Chen M."/>
            <person name="Ping S."/>
            <person name="Peng J."/>
            <person name="Lu W."/>
            <person name="Zhang W."/>
            <person name="Yao Z."/>
            <person name="Li H."/>
            <person name="Liu W."/>
            <person name="He S."/>
            <person name="Geng L."/>
            <person name="Zhang X."/>
            <person name="Yang F."/>
            <person name="Yu H."/>
            <person name="Zhan Y."/>
            <person name="Li D."/>
            <person name="Lin Z."/>
            <person name="Wang Y."/>
            <person name="Elmerich C."/>
            <person name="Lin M."/>
            <person name="Jin Q."/>
        </authorList>
    </citation>
    <scope>NUCLEOTIDE SEQUENCE [LARGE SCALE GENOMIC DNA]</scope>
    <source>
        <strain>A1501</strain>
    </source>
</reference>
<protein>
    <recommendedName>
        <fullName evidence="1">Methylthioribose-1-phosphate isomerase</fullName>
        <shortName evidence="1">M1Pi</shortName>
        <shortName evidence="1">MTR-1-P isomerase</shortName>
        <ecNumber evidence="1">5.3.1.23</ecNumber>
    </recommendedName>
    <alternativeName>
        <fullName evidence="1">S-methyl-5-thioribose-1-phosphate isomerase</fullName>
    </alternativeName>
</protein>
<comment type="function">
    <text evidence="1">Catalyzes the interconversion of methylthioribose-1-phosphate (MTR-1-P) into methylthioribulose-1-phosphate (MTRu-1-P).</text>
</comment>
<comment type="catalytic activity">
    <reaction evidence="1">
        <text>5-(methylsulfanyl)-alpha-D-ribose 1-phosphate = 5-(methylsulfanyl)-D-ribulose 1-phosphate</text>
        <dbReference type="Rhea" id="RHEA:19989"/>
        <dbReference type="ChEBI" id="CHEBI:58533"/>
        <dbReference type="ChEBI" id="CHEBI:58548"/>
        <dbReference type="EC" id="5.3.1.23"/>
    </reaction>
</comment>
<comment type="pathway">
    <text evidence="1">Amino-acid biosynthesis; L-methionine biosynthesis via salvage pathway; L-methionine from S-methyl-5-thio-alpha-D-ribose 1-phosphate: step 1/6.</text>
</comment>
<comment type="similarity">
    <text evidence="2">Belongs to the eIF-2B alpha/beta/delta subunits family. MtnA subfamily.</text>
</comment>
<comment type="sequence caution" evidence="2">
    <conflict type="erroneous initiation">
        <sequence resource="EMBL-CDS" id="ABP79999"/>
    </conflict>
</comment>